<proteinExistence type="inferred from homology"/>
<organism>
    <name type="scientific">Brucella abortus (strain 2308)</name>
    <dbReference type="NCBI Taxonomy" id="359391"/>
    <lineage>
        <taxon>Bacteria</taxon>
        <taxon>Pseudomonadati</taxon>
        <taxon>Pseudomonadota</taxon>
        <taxon>Alphaproteobacteria</taxon>
        <taxon>Hyphomicrobiales</taxon>
        <taxon>Brucellaceae</taxon>
        <taxon>Brucella/Ochrobactrum group</taxon>
        <taxon>Brucella</taxon>
    </lineage>
</organism>
<name>UBIG_BRUA2</name>
<accession>Q2YLN5</accession>
<sequence>MTETARTTIDASEIEHFSRIAAQWWDPQGKFRPLHKFNPTRLAYIKEKVCAKFNRDPNAPRPLEGLRFLDIGCGGGLLCEPMARLGATVIGADASATNIEVAKIHAAQSSLDIDYRATTAEALADAGEKFDVVLNMEVVEHVSDVDLFMSATSAMVKPGGLMFVATINRTLKAYGLAIIGAEYVLRWLPRGTHQYEKLVRPEELEAAFSKADLRLIDKLGVTYNPLADSWNRSRDMDVNYMVLAERPA</sequence>
<protein>
    <recommendedName>
        <fullName evidence="1">Ubiquinone biosynthesis O-methyltransferase</fullName>
    </recommendedName>
    <alternativeName>
        <fullName evidence="1">2-polyprenyl-6-hydroxyphenol methylase</fullName>
        <ecNumber evidence="1">2.1.1.222</ecNumber>
    </alternativeName>
    <alternativeName>
        <fullName evidence="1">3-demethylubiquinone 3-O-methyltransferase</fullName>
        <ecNumber evidence="1">2.1.1.64</ecNumber>
    </alternativeName>
</protein>
<keyword id="KW-0489">Methyltransferase</keyword>
<keyword id="KW-1185">Reference proteome</keyword>
<keyword id="KW-0949">S-adenosyl-L-methionine</keyword>
<keyword id="KW-0808">Transferase</keyword>
<keyword id="KW-0831">Ubiquinone biosynthesis</keyword>
<evidence type="ECO:0000255" key="1">
    <source>
        <dbReference type="HAMAP-Rule" id="MF_00472"/>
    </source>
</evidence>
<reference key="1">
    <citation type="journal article" date="2005" name="Infect. Immun.">
        <title>Whole-genome analyses of speciation events in pathogenic Brucellae.</title>
        <authorList>
            <person name="Chain P.S."/>
            <person name="Comerci D.J."/>
            <person name="Tolmasky M.E."/>
            <person name="Larimer F.W."/>
            <person name="Malfatti S.A."/>
            <person name="Vergez L.M."/>
            <person name="Aguero F."/>
            <person name="Land M.L."/>
            <person name="Ugalde R.A."/>
            <person name="Garcia E."/>
        </authorList>
    </citation>
    <scope>NUCLEOTIDE SEQUENCE [LARGE SCALE GENOMIC DNA]</scope>
    <source>
        <strain>2308</strain>
    </source>
</reference>
<gene>
    <name evidence="1" type="primary">ubiG</name>
    <name type="ordered locus">BAB1_1875</name>
</gene>
<comment type="function">
    <text evidence="1">O-methyltransferase that catalyzes the 2 O-methylation steps in the ubiquinone biosynthetic pathway.</text>
</comment>
<comment type="catalytic activity">
    <reaction evidence="1">
        <text>a 3-demethylubiquinol + S-adenosyl-L-methionine = a ubiquinol + S-adenosyl-L-homocysteine + H(+)</text>
        <dbReference type="Rhea" id="RHEA:44380"/>
        <dbReference type="Rhea" id="RHEA-COMP:9566"/>
        <dbReference type="Rhea" id="RHEA-COMP:10914"/>
        <dbReference type="ChEBI" id="CHEBI:15378"/>
        <dbReference type="ChEBI" id="CHEBI:17976"/>
        <dbReference type="ChEBI" id="CHEBI:57856"/>
        <dbReference type="ChEBI" id="CHEBI:59789"/>
        <dbReference type="ChEBI" id="CHEBI:84422"/>
        <dbReference type="EC" id="2.1.1.64"/>
    </reaction>
</comment>
<comment type="catalytic activity">
    <reaction evidence="1">
        <text>a 3-(all-trans-polyprenyl)benzene-1,2-diol + S-adenosyl-L-methionine = a 2-methoxy-6-(all-trans-polyprenyl)phenol + S-adenosyl-L-homocysteine + H(+)</text>
        <dbReference type="Rhea" id="RHEA:31411"/>
        <dbReference type="Rhea" id="RHEA-COMP:9550"/>
        <dbReference type="Rhea" id="RHEA-COMP:9551"/>
        <dbReference type="ChEBI" id="CHEBI:15378"/>
        <dbReference type="ChEBI" id="CHEBI:57856"/>
        <dbReference type="ChEBI" id="CHEBI:59789"/>
        <dbReference type="ChEBI" id="CHEBI:62729"/>
        <dbReference type="ChEBI" id="CHEBI:62731"/>
        <dbReference type="EC" id="2.1.1.222"/>
    </reaction>
</comment>
<comment type="pathway">
    <text evidence="1">Cofactor biosynthesis; ubiquinone biosynthesis.</text>
</comment>
<comment type="similarity">
    <text evidence="1">Belongs to the methyltransferase superfamily. UbiG/COQ3 family.</text>
</comment>
<dbReference type="EC" id="2.1.1.222" evidence="1"/>
<dbReference type="EC" id="2.1.1.64" evidence="1"/>
<dbReference type="EMBL" id="AM040264">
    <property type="protein sequence ID" value="CAJ11831.1"/>
    <property type="molecule type" value="Genomic_DNA"/>
</dbReference>
<dbReference type="RefSeq" id="WP_002964945.1">
    <property type="nucleotide sequence ID" value="NZ_KN046823.1"/>
</dbReference>
<dbReference type="SMR" id="Q2YLN5"/>
<dbReference type="STRING" id="359391.BAB1_1875"/>
<dbReference type="GeneID" id="97534838"/>
<dbReference type="KEGG" id="bmf:BAB1_1875"/>
<dbReference type="HOGENOM" id="CLU_042432_0_0_5"/>
<dbReference type="UniPathway" id="UPA00232"/>
<dbReference type="Proteomes" id="UP000002719">
    <property type="component" value="Chromosome I"/>
</dbReference>
<dbReference type="GO" id="GO:0102208">
    <property type="term" value="F:2-polyprenyl-6-hydroxyphenol methylase activity"/>
    <property type="evidence" value="ECO:0007669"/>
    <property type="project" value="UniProtKB-EC"/>
</dbReference>
<dbReference type="GO" id="GO:0061542">
    <property type="term" value="F:3-demethylubiquinol 3-O-methyltransferase activity"/>
    <property type="evidence" value="ECO:0007669"/>
    <property type="project" value="UniProtKB-UniRule"/>
</dbReference>
<dbReference type="GO" id="GO:0010420">
    <property type="term" value="F:polyprenyldihydroxybenzoate methyltransferase activity"/>
    <property type="evidence" value="ECO:0007669"/>
    <property type="project" value="InterPro"/>
</dbReference>
<dbReference type="GO" id="GO:0032259">
    <property type="term" value="P:methylation"/>
    <property type="evidence" value="ECO:0007669"/>
    <property type="project" value="UniProtKB-KW"/>
</dbReference>
<dbReference type="CDD" id="cd02440">
    <property type="entry name" value="AdoMet_MTases"/>
    <property type="match status" value="1"/>
</dbReference>
<dbReference type="Gene3D" id="3.40.50.150">
    <property type="entry name" value="Vaccinia Virus protein VP39"/>
    <property type="match status" value="1"/>
</dbReference>
<dbReference type="HAMAP" id="MF_00472">
    <property type="entry name" value="UbiG"/>
    <property type="match status" value="1"/>
</dbReference>
<dbReference type="InterPro" id="IPR029063">
    <property type="entry name" value="SAM-dependent_MTases_sf"/>
</dbReference>
<dbReference type="InterPro" id="IPR010233">
    <property type="entry name" value="UbiG_MeTrfase"/>
</dbReference>
<dbReference type="NCBIfam" id="TIGR01983">
    <property type="entry name" value="UbiG"/>
    <property type="match status" value="1"/>
</dbReference>
<dbReference type="PANTHER" id="PTHR43464">
    <property type="entry name" value="METHYLTRANSFERASE"/>
    <property type="match status" value="1"/>
</dbReference>
<dbReference type="PANTHER" id="PTHR43464:SF19">
    <property type="entry name" value="UBIQUINONE BIOSYNTHESIS O-METHYLTRANSFERASE, MITOCHONDRIAL"/>
    <property type="match status" value="1"/>
</dbReference>
<dbReference type="Pfam" id="PF13489">
    <property type="entry name" value="Methyltransf_23"/>
    <property type="match status" value="1"/>
</dbReference>
<dbReference type="SUPFAM" id="SSF53335">
    <property type="entry name" value="S-adenosyl-L-methionine-dependent methyltransferases"/>
    <property type="match status" value="1"/>
</dbReference>
<feature type="chain" id="PRO_0000241703" description="Ubiquinone biosynthesis O-methyltransferase">
    <location>
        <begin position="1"/>
        <end position="248"/>
    </location>
</feature>
<feature type="binding site" evidence="1">
    <location>
        <position position="41"/>
    </location>
    <ligand>
        <name>S-adenosyl-L-methionine</name>
        <dbReference type="ChEBI" id="CHEBI:59789"/>
    </ligand>
</feature>
<feature type="binding site" evidence="1">
    <location>
        <position position="72"/>
    </location>
    <ligand>
        <name>S-adenosyl-L-methionine</name>
        <dbReference type="ChEBI" id="CHEBI:59789"/>
    </ligand>
</feature>
<feature type="binding site" evidence="1">
    <location>
        <position position="93"/>
    </location>
    <ligand>
        <name>S-adenosyl-L-methionine</name>
        <dbReference type="ChEBI" id="CHEBI:59789"/>
    </ligand>
</feature>
<feature type="binding site" evidence="1">
    <location>
        <position position="136"/>
    </location>
    <ligand>
        <name>S-adenosyl-L-methionine</name>
        <dbReference type="ChEBI" id="CHEBI:59789"/>
    </ligand>
</feature>